<name>CBIA_HALMA</name>
<keyword id="KW-0067">ATP-binding</keyword>
<keyword id="KW-0169">Cobalamin biosynthesis</keyword>
<keyword id="KW-0315">Glutamine amidotransferase</keyword>
<keyword id="KW-0436">Ligase</keyword>
<keyword id="KW-0460">Magnesium</keyword>
<keyword id="KW-0547">Nucleotide-binding</keyword>
<keyword id="KW-1185">Reference proteome</keyword>
<dbReference type="EC" id="6.3.5.11" evidence="1"/>
<dbReference type="EMBL" id="AY596297">
    <property type="protein sequence ID" value="AAV46061.1"/>
    <property type="molecule type" value="Genomic_DNA"/>
</dbReference>
<dbReference type="RefSeq" id="WP_011223446.1">
    <property type="nucleotide sequence ID" value="NC_006396.1"/>
</dbReference>
<dbReference type="SMR" id="Q5V341"/>
<dbReference type="STRING" id="272569.rrnAC1102"/>
<dbReference type="PaxDb" id="272569-rrnAC1102"/>
<dbReference type="EnsemblBacteria" id="AAV46061">
    <property type="protein sequence ID" value="AAV46061"/>
    <property type="gene ID" value="rrnAC1102"/>
</dbReference>
<dbReference type="GeneID" id="40152109"/>
<dbReference type="KEGG" id="hma:rrnAC1102"/>
<dbReference type="PATRIC" id="fig|272569.17.peg.1827"/>
<dbReference type="eggNOG" id="arCOG00106">
    <property type="taxonomic scope" value="Archaea"/>
</dbReference>
<dbReference type="HOGENOM" id="CLU_022752_2_0_2"/>
<dbReference type="UniPathway" id="UPA00148">
    <property type="reaction ID" value="UER00231"/>
</dbReference>
<dbReference type="Proteomes" id="UP000001169">
    <property type="component" value="Chromosome I"/>
</dbReference>
<dbReference type="GO" id="GO:0005524">
    <property type="term" value="F:ATP binding"/>
    <property type="evidence" value="ECO:0007669"/>
    <property type="project" value="UniProtKB-UniRule"/>
</dbReference>
<dbReference type="GO" id="GO:0042242">
    <property type="term" value="F:cobyrinic acid a,c-diamide synthase activity"/>
    <property type="evidence" value="ECO:0007669"/>
    <property type="project" value="UniProtKB-UniRule"/>
</dbReference>
<dbReference type="GO" id="GO:0009236">
    <property type="term" value="P:cobalamin biosynthetic process"/>
    <property type="evidence" value="ECO:0007669"/>
    <property type="project" value="UniProtKB-UniRule"/>
</dbReference>
<dbReference type="CDD" id="cd03130">
    <property type="entry name" value="GATase1_CobB"/>
    <property type="match status" value="1"/>
</dbReference>
<dbReference type="Gene3D" id="3.40.50.880">
    <property type="match status" value="1"/>
</dbReference>
<dbReference type="Gene3D" id="3.40.50.300">
    <property type="entry name" value="P-loop containing nucleotide triphosphate hydrolases"/>
    <property type="match status" value="1"/>
</dbReference>
<dbReference type="HAMAP" id="MF_00027">
    <property type="entry name" value="CobB_CbiA"/>
    <property type="match status" value="1"/>
</dbReference>
<dbReference type="InterPro" id="IPR004484">
    <property type="entry name" value="CbiA/CobB_synth"/>
</dbReference>
<dbReference type="InterPro" id="IPR029062">
    <property type="entry name" value="Class_I_gatase-like"/>
</dbReference>
<dbReference type="InterPro" id="IPR002586">
    <property type="entry name" value="CobQ/CobB/MinD/ParA_Nub-bd_dom"/>
</dbReference>
<dbReference type="InterPro" id="IPR011698">
    <property type="entry name" value="GATase_3"/>
</dbReference>
<dbReference type="InterPro" id="IPR027417">
    <property type="entry name" value="P-loop_NTPase"/>
</dbReference>
<dbReference type="NCBIfam" id="TIGR00379">
    <property type="entry name" value="cobB"/>
    <property type="match status" value="1"/>
</dbReference>
<dbReference type="NCBIfam" id="NF002204">
    <property type="entry name" value="PRK01077.1"/>
    <property type="match status" value="1"/>
</dbReference>
<dbReference type="NCBIfam" id="NF010471">
    <property type="entry name" value="PRK13896.1"/>
    <property type="match status" value="1"/>
</dbReference>
<dbReference type="PANTHER" id="PTHR43873">
    <property type="entry name" value="COBYRINATE A,C-DIAMIDE SYNTHASE"/>
    <property type="match status" value="1"/>
</dbReference>
<dbReference type="PANTHER" id="PTHR43873:SF1">
    <property type="entry name" value="COBYRINATE A,C-DIAMIDE SYNTHASE"/>
    <property type="match status" value="1"/>
</dbReference>
<dbReference type="Pfam" id="PF01656">
    <property type="entry name" value="CbiA"/>
    <property type="match status" value="1"/>
</dbReference>
<dbReference type="Pfam" id="PF07685">
    <property type="entry name" value="GATase_3"/>
    <property type="match status" value="1"/>
</dbReference>
<dbReference type="SUPFAM" id="SSF52317">
    <property type="entry name" value="Class I glutamine amidotransferase-like"/>
    <property type="match status" value="1"/>
</dbReference>
<dbReference type="SUPFAM" id="SSF52540">
    <property type="entry name" value="P-loop containing nucleoside triphosphate hydrolases"/>
    <property type="match status" value="1"/>
</dbReference>
<dbReference type="PROSITE" id="PS51274">
    <property type="entry name" value="GATASE_COBBQ"/>
    <property type="match status" value="1"/>
</dbReference>
<gene>
    <name evidence="1" type="primary">cbiA</name>
    <name type="ordered locus">rrnAC1102</name>
</gene>
<proteinExistence type="inferred from homology"/>
<reference key="1">
    <citation type="journal article" date="2004" name="Genome Res.">
        <title>Genome sequence of Haloarcula marismortui: a halophilic archaeon from the Dead Sea.</title>
        <authorList>
            <person name="Baliga N.S."/>
            <person name="Bonneau R."/>
            <person name="Facciotti M.T."/>
            <person name="Pan M."/>
            <person name="Glusman G."/>
            <person name="Deutsch E.W."/>
            <person name="Shannon P."/>
            <person name="Chiu Y."/>
            <person name="Weng R.S."/>
            <person name="Gan R.R."/>
            <person name="Hung P."/>
            <person name="Date S.V."/>
            <person name="Marcotte E."/>
            <person name="Hood L."/>
            <person name="Ng W.V."/>
        </authorList>
    </citation>
    <scope>NUCLEOTIDE SEQUENCE [LARGE SCALE GENOMIC DNA]</scope>
    <source>
        <strain>ATCC 43049 / DSM 3752 / JCM 8966 / VKM B-1809</strain>
    </source>
</reference>
<protein>
    <recommendedName>
        <fullName evidence="1">Cobyrinate a,c-diamide synthase</fullName>
        <ecNumber evidence="1">6.3.5.11</ecNumber>
    </recommendedName>
    <alternativeName>
        <fullName evidence="1">Cobyrinic acid a,c-diamide synthetase</fullName>
    </alternativeName>
</protein>
<feature type="chain" id="PRO_0000141274" description="Cobyrinate a,c-diamide synthase">
    <location>
        <begin position="1"/>
        <end position="439"/>
    </location>
</feature>
<feature type="domain" description="GATase cobBQ-type" evidence="1">
    <location>
        <begin position="237"/>
        <end position="428"/>
    </location>
</feature>
<feature type="region of interest" description="Disordered" evidence="2">
    <location>
        <begin position="214"/>
        <end position="235"/>
    </location>
</feature>
<feature type="active site" description="Nucleophile" evidence="1">
    <location>
        <position position="317"/>
    </location>
</feature>
<feature type="site" description="Increases nucleophilicity of active site Cys" evidence="1">
    <location>
        <position position="420"/>
    </location>
</feature>
<evidence type="ECO:0000255" key="1">
    <source>
        <dbReference type="HAMAP-Rule" id="MF_00027"/>
    </source>
</evidence>
<evidence type="ECO:0000256" key="2">
    <source>
        <dbReference type="SAM" id="MobiDB-lite"/>
    </source>
</evidence>
<comment type="function">
    <text evidence="1">Catalyzes the ATP-dependent amidation of the two carboxylate groups at positions a and c of cobyrinate, using either L-glutamine or ammonia as the nitrogen source.</text>
</comment>
<comment type="catalytic activity">
    <reaction evidence="1">
        <text>cob(II)yrinate + 2 L-glutamine + 2 ATP + 2 H2O = cob(II)yrinate a,c diamide + 2 L-glutamate + 2 ADP + 2 phosphate + 2 H(+)</text>
        <dbReference type="Rhea" id="RHEA:26289"/>
        <dbReference type="ChEBI" id="CHEBI:15377"/>
        <dbReference type="ChEBI" id="CHEBI:15378"/>
        <dbReference type="ChEBI" id="CHEBI:29985"/>
        <dbReference type="ChEBI" id="CHEBI:30616"/>
        <dbReference type="ChEBI" id="CHEBI:43474"/>
        <dbReference type="ChEBI" id="CHEBI:58359"/>
        <dbReference type="ChEBI" id="CHEBI:58537"/>
        <dbReference type="ChEBI" id="CHEBI:58894"/>
        <dbReference type="ChEBI" id="CHEBI:456216"/>
        <dbReference type="EC" id="6.3.5.11"/>
    </reaction>
</comment>
<comment type="cofactor">
    <cofactor evidence="1">
        <name>Mg(2+)</name>
        <dbReference type="ChEBI" id="CHEBI:18420"/>
    </cofactor>
</comment>
<comment type="pathway">
    <text evidence="1">Cofactor biosynthesis; adenosylcobalamin biosynthesis; cob(II)yrinate a,c-diamide from sirohydrochlorin (anaerobic route): step 10/10.</text>
</comment>
<comment type="domain">
    <text evidence="1">Comprises of two domains. The C-terminal domain contains the binding site for glutamine and catalyzes the hydrolysis of this substrate to glutamate and ammonia. The N-terminal domain is anticipated to bind ATP and cobyrinate and catalyzes the ultimate synthesis of the diamide product. The ammonia produced via the glutaminase domain is probably translocated to the adjacent domain via a molecular tunnel, where it reacts with an activated intermediate.</text>
</comment>
<comment type="miscellaneous">
    <text evidence="1">The a and c carboxylates of cobyrinate are activated for nucleophilic attack via formation of a phosphorylated intermediate by ATP. CbiA catalyzes first the amidation of the c-carboxylate, and then that of the a-carboxylate.</text>
</comment>
<comment type="similarity">
    <text evidence="1">Belongs to the CobB/CbiA family.</text>
</comment>
<accession>Q5V341</accession>
<organism>
    <name type="scientific">Haloarcula marismortui (strain ATCC 43049 / DSM 3752 / JCM 8966 / VKM B-1809)</name>
    <name type="common">Halobacterium marismortui</name>
    <dbReference type="NCBI Taxonomy" id="272569"/>
    <lineage>
        <taxon>Archaea</taxon>
        <taxon>Methanobacteriati</taxon>
        <taxon>Methanobacteriota</taxon>
        <taxon>Stenosarchaea group</taxon>
        <taxon>Halobacteria</taxon>
        <taxon>Halobacteriales</taxon>
        <taxon>Haloarculaceae</taxon>
        <taxon>Haloarcula</taxon>
    </lineage>
</organism>
<sequence>MEGFVLAGTSSGVGKTVATLATLTALEDAGYQPQPAKAGPDFIDPSHHEALVDTPSRTLDPWLAGEDGMRRTYWRGTGDICVVEGVMGLYDGTKTSTAAVAEGLDLPVVLVVDAKAGMESVAATALGFAQYADRIGVDIEVAGILAQRAHGGRHADGIRDALPEDLTYFGRIPPMSDLEIPDRHLGLHMGSEAGLDRDALSTAAETIDIERLVETARAPPEVATTERNTGDSPADRRVAVAQDSAFCFIYPSVLERLRSEASVEPFSPVAGDSVPDADAIYLPGGYPELHGESLETGGTLDEIAVRAADGVPVYGECGGLMALSESLTTTDGDTYEMAGVLPADIEMQDRYQALDHVELEARADTVAATSGAHRRGHEFHYSAATLGSDASFAFDMVRGDGIDGEHDGLTEYSTIGTYCHCHGESGAFDRLLAVPSKDI</sequence>